<comment type="function">
    <text evidence="1">With EpmB is involved in the beta-lysylation step of the post-translational modification of translation elongation factor P (EF-P) on 'Lys-34'. Catalyzes the ATP-dependent activation of (R)-beta-lysine produced by EpmB, forming a lysyl-adenylate, from which the beta-lysyl moiety is then transferred to the epsilon-amino group of EF-P 'Lys-34'.</text>
</comment>
<comment type="catalytic activity">
    <reaction evidence="1">
        <text>D-beta-lysine + L-lysyl-[protein] + ATP = N(6)-((3R)-3,6-diaminohexanoyl)-L-lysyl-[protein] + AMP + diphosphate + H(+)</text>
        <dbReference type="Rhea" id="RHEA:83435"/>
        <dbReference type="Rhea" id="RHEA-COMP:9752"/>
        <dbReference type="Rhea" id="RHEA-COMP:20131"/>
        <dbReference type="ChEBI" id="CHEBI:15378"/>
        <dbReference type="ChEBI" id="CHEBI:29969"/>
        <dbReference type="ChEBI" id="CHEBI:30616"/>
        <dbReference type="ChEBI" id="CHEBI:33019"/>
        <dbReference type="ChEBI" id="CHEBI:84138"/>
        <dbReference type="ChEBI" id="CHEBI:156053"/>
        <dbReference type="ChEBI" id="CHEBI:456215"/>
    </reaction>
    <physiologicalReaction direction="left-to-right" evidence="1">
        <dbReference type="Rhea" id="RHEA:83436"/>
    </physiologicalReaction>
</comment>
<comment type="subunit">
    <text evidence="1">Homodimer.</text>
</comment>
<comment type="similarity">
    <text evidence="1">Belongs to the class-II aminoacyl-tRNA synthetase family. EpmA subfamily.</text>
</comment>
<name>EPMA_ECO7I</name>
<keyword id="KW-0067">ATP-binding</keyword>
<keyword id="KW-0436">Ligase</keyword>
<keyword id="KW-0547">Nucleotide-binding</keyword>
<organism>
    <name type="scientific">Escherichia coli O7:K1 (strain IAI39 / ExPEC)</name>
    <dbReference type="NCBI Taxonomy" id="585057"/>
    <lineage>
        <taxon>Bacteria</taxon>
        <taxon>Pseudomonadati</taxon>
        <taxon>Pseudomonadota</taxon>
        <taxon>Gammaproteobacteria</taxon>
        <taxon>Enterobacterales</taxon>
        <taxon>Enterobacteriaceae</taxon>
        <taxon>Escherichia</taxon>
    </lineage>
</organism>
<accession>B7NTL6</accession>
<evidence type="ECO:0000255" key="1">
    <source>
        <dbReference type="HAMAP-Rule" id="MF_00174"/>
    </source>
</evidence>
<sequence length="325" mass="36976">MSETASWQPSASIPNLLKRAAIMAEIRRFFADRGVLEVETPCMSQATVTDIHLVPFETRFVGPGHSQGMNLWLMTSPEYHMKRLLVAGCGPVFQLCRSFRNEEMGRYHNPEFTMLEWYRPHYDMYRLMNEVDDLLQQVLDCPAAESLSYQQAFLRYLEIDPLSADKTQLREVAAKLDLSNVADTEEDRDTLLQLLFTFGVEPNIGKEKPTFVYHFPASQASLAQISTEDHRVAERFEVYYKGIELANGFHELTDAREQQQRFEQDNRKRAARGLPQHPIDQNLIEALKVGMPDCSGVALGVDRLVMLALGAETLAEVIAFSVDRA</sequence>
<protein>
    <recommendedName>
        <fullName evidence="1">Elongation factor P--(R)-beta-lysine ligase</fullName>
        <shortName evidence="1">EF-P--(R)-beta-lysine ligase</shortName>
        <ecNumber evidence="1">6.3.2.-</ecNumber>
    </recommendedName>
    <alternativeName>
        <fullName evidence="1">EF-P post-translational modification enzyme A</fullName>
    </alternativeName>
    <alternativeName>
        <fullName evidence="1">EF-P-lysine lysyltransferase</fullName>
    </alternativeName>
</protein>
<gene>
    <name evidence="1" type="primary">epmA</name>
    <name type="synonym">yjeA</name>
    <name type="ordered locus">ECIAI39_4622</name>
</gene>
<dbReference type="EC" id="6.3.2.-" evidence="1"/>
<dbReference type="EMBL" id="CU928164">
    <property type="protein sequence ID" value="CAR20722.1"/>
    <property type="molecule type" value="Genomic_DNA"/>
</dbReference>
<dbReference type="RefSeq" id="WP_000004771.1">
    <property type="nucleotide sequence ID" value="NC_011750.1"/>
</dbReference>
<dbReference type="RefSeq" id="YP_002410486.1">
    <property type="nucleotide sequence ID" value="NC_011750.1"/>
</dbReference>
<dbReference type="SMR" id="B7NTL6"/>
<dbReference type="STRING" id="585057.ECIAI39_4622"/>
<dbReference type="GeneID" id="93777667"/>
<dbReference type="KEGG" id="ect:ECIAI39_4622"/>
<dbReference type="PATRIC" id="fig|585057.6.peg.4771"/>
<dbReference type="HOGENOM" id="CLU_008255_1_1_6"/>
<dbReference type="Proteomes" id="UP000000749">
    <property type="component" value="Chromosome"/>
</dbReference>
<dbReference type="GO" id="GO:0005829">
    <property type="term" value="C:cytosol"/>
    <property type="evidence" value="ECO:0007669"/>
    <property type="project" value="TreeGrafter"/>
</dbReference>
<dbReference type="GO" id="GO:0016880">
    <property type="term" value="F:acid-ammonia (or amide) ligase activity"/>
    <property type="evidence" value="ECO:0007669"/>
    <property type="project" value="UniProtKB-UniRule"/>
</dbReference>
<dbReference type="GO" id="GO:0005524">
    <property type="term" value="F:ATP binding"/>
    <property type="evidence" value="ECO:0007669"/>
    <property type="project" value="UniProtKB-UniRule"/>
</dbReference>
<dbReference type="GO" id="GO:0004824">
    <property type="term" value="F:lysine-tRNA ligase activity"/>
    <property type="evidence" value="ECO:0007669"/>
    <property type="project" value="InterPro"/>
</dbReference>
<dbReference type="GO" id="GO:0000049">
    <property type="term" value="F:tRNA binding"/>
    <property type="evidence" value="ECO:0007669"/>
    <property type="project" value="TreeGrafter"/>
</dbReference>
<dbReference type="GO" id="GO:0006430">
    <property type="term" value="P:lysyl-tRNA aminoacylation"/>
    <property type="evidence" value="ECO:0007669"/>
    <property type="project" value="InterPro"/>
</dbReference>
<dbReference type="FunFam" id="3.30.930.10:FF:000017">
    <property type="entry name" value="Elongation factor P--(R)-beta-lysine ligase"/>
    <property type="match status" value="1"/>
</dbReference>
<dbReference type="Gene3D" id="3.30.930.10">
    <property type="entry name" value="Bira Bifunctional Protein, Domain 2"/>
    <property type="match status" value="1"/>
</dbReference>
<dbReference type="HAMAP" id="MF_00174">
    <property type="entry name" value="EF_P_modif_A"/>
    <property type="match status" value="1"/>
</dbReference>
<dbReference type="InterPro" id="IPR004364">
    <property type="entry name" value="Aa-tRNA-synt_II"/>
</dbReference>
<dbReference type="InterPro" id="IPR006195">
    <property type="entry name" value="aa-tRNA-synth_II"/>
</dbReference>
<dbReference type="InterPro" id="IPR045864">
    <property type="entry name" value="aa-tRNA-synth_II/BPL/LPL"/>
</dbReference>
<dbReference type="InterPro" id="IPR004525">
    <property type="entry name" value="EpmA"/>
</dbReference>
<dbReference type="InterPro" id="IPR018149">
    <property type="entry name" value="Lys-tRNA-synth_II_C"/>
</dbReference>
<dbReference type="NCBIfam" id="TIGR00462">
    <property type="entry name" value="genX"/>
    <property type="match status" value="1"/>
</dbReference>
<dbReference type="NCBIfam" id="NF006828">
    <property type="entry name" value="PRK09350.1"/>
    <property type="match status" value="1"/>
</dbReference>
<dbReference type="PANTHER" id="PTHR42918:SF6">
    <property type="entry name" value="ELONGATION FACTOR P--(R)-BETA-LYSINE LIGASE"/>
    <property type="match status" value="1"/>
</dbReference>
<dbReference type="PANTHER" id="PTHR42918">
    <property type="entry name" value="LYSYL-TRNA SYNTHETASE"/>
    <property type="match status" value="1"/>
</dbReference>
<dbReference type="Pfam" id="PF00152">
    <property type="entry name" value="tRNA-synt_2"/>
    <property type="match status" value="1"/>
</dbReference>
<dbReference type="PRINTS" id="PR00982">
    <property type="entry name" value="TRNASYNTHLYS"/>
</dbReference>
<dbReference type="SUPFAM" id="SSF55681">
    <property type="entry name" value="Class II aaRS and biotin synthetases"/>
    <property type="match status" value="1"/>
</dbReference>
<dbReference type="PROSITE" id="PS50862">
    <property type="entry name" value="AA_TRNA_LIGASE_II"/>
    <property type="match status" value="1"/>
</dbReference>
<feature type="chain" id="PRO_1000199259" description="Elongation factor P--(R)-beta-lysine ligase">
    <location>
        <begin position="1"/>
        <end position="325"/>
    </location>
</feature>
<feature type="binding site" evidence="1">
    <location>
        <begin position="76"/>
        <end position="78"/>
    </location>
    <ligand>
        <name>substrate</name>
    </ligand>
</feature>
<feature type="binding site" evidence="1">
    <location>
        <begin position="100"/>
        <end position="102"/>
    </location>
    <ligand>
        <name>ATP</name>
        <dbReference type="ChEBI" id="CHEBI:30616"/>
    </ligand>
</feature>
<feature type="binding site" evidence="1">
    <location>
        <position position="109"/>
    </location>
    <ligand>
        <name>ATP</name>
        <dbReference type="ChEBI" id="CHEBI:30616"/>
    </ligand>
</feature>
<feature type="binding site" evidence="1">
    <location>
        <position position="118"/>
    </location>
    <ligand>
        <name>substrate</name>
    </ligand>
</feature>
<feature type="binding site" evidence="1">
    <location>
        <begin position="244"/>
        <end position="245"/>
    </location>
    <ligand>
        <name>ATP</name>
        <dbReference type="ChEBI" id="CHEBI:30616"/>
    </ligand>
</feature>
<feature type="binding site" evidence="1">
    <location>
        <position position="251"/>
    </location>
    <ligand>
        <name>substrate</name>
    </ligand>
</feature>
<feature type="binding site" evidence="1">
    <location>
        <position position="300"/>
    </location>
    <ligand>
        <name>ATP</name>
        <dbReference type="ChEBI" id="CHEBI:30616"/>
    </ligand>
</feature>
<reference key="1">
    <citation type="journal article" date="2009" name="PLoS Genet.">
        <title>Organised genome dynamics in the Escherichia coli species results in highly diverse adaptive paths.</title>
        <authorList>
            <person name="Touchon M."/>
            <person name="Hoede C."/>
            <person name="Tenaillon O."/>
            <person name="Barbe V."/>
            <person name="Baeriswyl S."/>
            <person name="Bidet P."/>
            <person name="Bingen E."/>
            <person name="Bonacorsi S."/>
            <person name="Bouchier C."/>
            <person name="Bouvet O."/>
            <person name="Calteau A."/>
            <person name="Chiapello H."/>
            <person name="Clermont O."/>
            <person name="Cruveiller S."/>
            <person name="Danchin A."/>
            <person name="Diard M."/>
            <person name="Dossat C."/>
            <person name="Karoui M.E."/>
            <person name="Frapy E."/>
            <person name="Garry L."/>
            <person name="Ghigo J.M."/>
            <person name="Gilles A.M."/>
            <person name="Johnson J."/>
            <person name="Le Bouguenec C."/>
            <person name="Lescat M."/>
            <person name="Mangenot S."/>
            <person name="Martinez-Jehanne V."/>
            <person name="Matic I."/>
            <person name="Nassif X."/>
            <person name="Oztas S."/>
            <person name="Petit M.A."/>
            <person name="Pichon C."/>
            <person name="Rouy Z."/>
            <person name="Ruf C.S."/>
            <person name="Schneider D."/>
            <person name="Tourret J."/>
            <person name="Vacherie B."/>
            <person name="Vallenet D."/>
            <person name="Medigue C."/>
            <person name="Rocha E.P.C."/>
            <person name="Denamur E."/>
        </authorList>
    </citation>
    <scope>NUCLEOTIDE SEQUENCE [LARGE SCALE GENOMIC DNA]</scope>
    <source>
        <strain>IAI39 / ExPEC</strain>
    </source>
</reference>
<proteinExistence type="inferred from homology"/>